<feature type="chain" id="PRO_0000339037" description="ATP synthase subunit alpha 1">
    <location>
        <begin position="1"/>
        <end position="498"/>
    </location>
</feature>
<feature type="binding site" evidence="1">
    <location>
        <begin position="164"/>
        <end position="171"/>
    </location>
    <ligand>
        <name>ATP</name>
        <dbReference type="ChEBI" id="CHEBI:30616"/>
    </ligand>
</feature>
<feature type="site" description="Required for activity" evidence="1">
    <location>
        <position position="357"/>
    </location>
</feature>
<proteinExistence type="inferred from homology"/>
<dbReference type="EC" id="7.1.2.2" evidence="1"/>
<dbReference type="EMBL" id="AM263198">
    <property type="protein sequence ID" value="CAK19841.1"/>
    <property type="molecule type" value="Genomic_DNA"/>
</dbReference>
<dbReference type="RefSeq" id="WP_011701272.1">
    <property type="nucleotide sequence ID" value="NC_008555.1"/>
</dbReference>
<dbReference type="SMR" id="A0AFQ9"/>
<dbReference type="STRING" id="386043.lwe0423"/>
<dbReference type="GeneID" id="61188313"/>
<dbReference type="KEGG" id="lwe:lwe0423"/>
<dbReference type="eggNOG" id="COG0056">
    <property type="taxonomic scope" value="Bacteria"/>
</dbReference>
<dbReference type="HOGENOM" id="CLU_010091_2_1_9"/>
<dbReference type="OrthoDB" id="9802718at2"/>
<dbReference type="Proteomes" id="UP000000779">
    <property type="component" value="Chromosome"/>
</dbReference>
<dbReference type="GO" id="GO:0005886">
    <property type="term" value="C:plasma membrane"/>
    <property type="evidence" value="ECO:0007669"/>
    <property type="project" value="UniProtKB-SubCell"/>
</dbReference>
<dbReference type="GO" id="GO:0045259">
    <property type="term" value="C:proton-transporting ATP synthase complex"/>
    <property type="evidence" value="ECO:0007669"/>
    <property type="project" value="UniProtKB-KW"/>
</dbReference>
<dbReference type="GO" id="GO:0043531">
    <property type="term" value="F:ADP binding"/>
    <property type="evidence" value="ECO:0007669"/>
    <property type="project" value="TreeGrafter"/>
</dbReference>
<dbReference type="GO" id="GO:0005524">
    <property type="term" value="F:ATP binding"/>
    <property type="evidence" value="ECO:0007669"/>
    <property type="project" value="UniProtKB-UniRule"/>
</dbReference>
<dbReference type="GO" id="GO:0046933">
    <property type="term" value="F:proton-transporting ATP synthase activity, rotational mechanism"/>
    <property type="evidence" value="ECO:0007669"/>
    <property type="project" value="UniProtKB-UniRule"/>
</dbReference>
<dbReference type="CDD" id="cd18113">
    <property type="entry name" value="ATP-synt_F1_alpha_C"/>
    <property type="match status" value="1"/>
</dbReference>
<dbReference type="CDD" id="cd01132">
    <property type="entry name" value="F1-ATPase_alpha_CD"/>
    <property type="match status" value="1"/>
</dbReference>
<dbReference type="FunFam" id="3.40.50.300:FF:002432">
    <property type="entry name" value="ATP synthase subunit alpha, mitochondrial"/>
    <property type="match status" value="1"/>
</dbReference>
<dbReference type="Gene3D" id="2.40.30.20">
    <property type="match status" value="1"/>
</dbReference>
<dbReference type="Gene3D" id="1.20.150.20">
    <property type="entry name" value="ATP synthase alpha/beta chain, C-terminal domain"/>
    <property type="match status" value="1"/>
</dbReference>
<dbReference type="Gene3D" id="3.40.50.300">
    <property type="entry name" value="P-loop containing nucleotide triphosphate hydrolases"/>
    <property type="match status" value="1"/>
</dbReference>
<dbReference type="HAMAP" id="MF_01346">
    <property type="entry name" value="ATP_synth_alpha_bact"/>
    <property type="match status" value="1"/>
</dbReference>
<dbReference type="InterPro" id="IPR023366">
    <property type="entry name" value="ATP_synth_asu-like_sf"/>
</dbReference>
<dbReference type="InterPro" id="IPR000793">
    <property type="entry name" value="ATP_synth_asu_C"/>
</dbReference>
<dbReference type="InterPro" id="IPR038376">
    <property type="entry name" value="ATP_synth_asu_C_sf"/>
</dbReference>
<dbReference type="InterPro" id="IPR033732">
    <property type="entry name" value="ATP_synth_F1_a_nt-bd_dom"/>
</dbReference>
<dbReference type="InterPro" id="IPR005294">
    <property type="entry name" value="ATP_synth_F1_asu"/>
</dbReference>
<dbReference type="InterPro" id="IPR020003">
    <property type="entry name" value="ATPase_a/bsu_AS"/>
</dbReference>
<dbReference type="InterPro" id="IPR036121">
    <property type="entry name" value="ATPase_F1/V1/A1_a/bsu_N_sf"/>
</dbReference>
<dbReference type="InterPro" id="IPR000194">
    <property type="entry name" value="ATPase_F1/V1/A1_a/bsu_nucl-bd"/>
</dbReference>
<dbReference type="InterPro" id="IPR027417">
    <property type="entry name" value="P-loop_NTPase"/>
</dbReference>
<dbReference type="NCBIfam" id="TIGR00962">
    <property type="entry name" value="atpA"/>
    <property type="match status" value="1"/>
</dbReference>
<dbReference type="NCBIfam" id="NF009884">
    <property type="entry name" value="PRK13343.1"/>
    <property type="match status" value="1"/>
</dbReference>
<dbReference type="PANTHER" id="PTHR48082">
    <property type="entry name" value="ATP SYNTHASE SUBUNIT ALPHA, MITOCHONDRIAL"/>
    <property type="match status" value="1"/>
</dbReference>
<dbReference type="PANTHER" id="PTHR48082:SF2">
    <property type="entry name" value="ATP SYNTHASE SUBUNIT ALPHA, MITOCHONDRIAL"/>
    <property type="match status" value="1"/>
</dbReference>
<dbReference type="Pfam" id="PF00006">
    <property type="entry name" value="ATP-synt_ab"/>
    <property type="match status" value="1"/>
</dbReference>
<dbReference type="Pfam" id="PF00306">
    <property type="entry name" value="ATP-synt_ab_C"/>
    <property type="match status" value="1"/>
</dbReference>
<dbReference type="SUPFAM" id="SSF47917">
    <property type="entry name" value="C-terminal domain of alpha and beta subunits of F1 ATP synthase"/>
    <property type="match status" value="1"/>
</dbReference>
<dbReference type="SUPFAM" id="SSF50615">
    <property type="entry name" value="N-terminal domain of alpha and beta subunits of F1 ATP synthase"/>
    <property type="match status" value="1"/>
</dbReference>
<dbReference type="SUPFAM" id="SSF52540">
    <property type="entry name" value="P-loop containing nucleoside triphosphate hydrolases"/>
    <property type="match status" value="1"/>
</dbReference>
<dbReference type="PROSITE" id="PS00152">
    <property type="entry name" value="ATPASE_ALPHA_BETA"/>
    <property type="match status" value="1"/>
</dbReference>
<gene>
    <name evidence="1" type="primary">atpA1</name>
    <name type="ordered locus">lwe0423</name>
</gene>
<protein>
    <recommendedName>
        <fullName evidence="1">ATP synthase subunit alpha 1</fullName>
        <ecNumber evidence="1">7.1.2.2</ecNumber>
    </recommendedName>
    <alternativeName>
        <fullName evidence="1">ATP synthase F1 sector subunit alpha 1</fullName>
    </alternativeName>
    <alternativeName>
        <fullName evidence="1">F-ATPase subunit alpha 1</fullName>
    </alternativeName>
</protein>
<keyword id="KW-0066">ATP synthesis</keyword>
<keyword id="KW-0067">ATP-binding</keyword>
<keyword id="KW-1003">Cell membrane</keyword>
<keyword id="KW-0139">CF(1)</keyword>
<keyword id="KW-0375">Hydrogen ion transport</keyword>
<keyword id="KW-0406">Ion transport</keyword>
<keyword id="KW-0472">Membrane</keyword>
<keyword id="KW-0547">Nucleotide-binding</keyword>
<keyword id="KW-1278">Translocase</keyword>
<keyword id="KW-0813">Transport</keyword>
<evidence type="ECO:0000255" key="1">
    <source>
        <dbReference type="HAMAP-Rule" id="MF_01346"/>
    </source>
</evidence>
<name>ATPA1_LISW6</name>
<comment type="function">
    <text evidence="1">Produces ATP from ADP in the presence of a proton gradient across the membrane. The alpha chain is a regulatory subunit.</text>
</comment>
<comment type="catalytic activity">
    <reaction evidence="1">
        <text>ATP + H2O + 4 H(+)(in) = ADP + phosphate + 5 H(+)(out)</text>
        <dbReference type="Rhea" id="RHEA:57720"/>
        <dbReference type="ChEBI" id="CHEBI:15377"/>
        <dbReference type="ChEBI" id="CHEBI:15378"/>
        <dbReference type="ChEBI" id="CHEBI:30616"/>
        <dbReference type="ChEBI" id="CHEBI:43474"/>
        <dbReference type="ChEBI" id="CHEBI:456216"/>
        <dbReference type="EC" id="7.1.2.2"/>
    </reaction>
</comment>
<comment type="subunit">
    <text evidence="1">F-type ATPases have 2 components, CF(1) - the catalytic core - and CF(0) - the membrane proton channel. CF(1) has five subunits: alpha(3), beta(3), gamma(1), delta(1), epsilon(1). CF(0) has three main subunits: a(1), b(2) and c(9-12). The alpha and beta chains form an alternating ring which encloses part of the gamma chain. CF(1) is attached to CF(0) by a central stalk formed by the gamma and epsilon chains, while a peripheral stalk is formed by the delta and b chains.</text>
</comment>
<comment type="subcellular location">
    <subcellularLocation>
        <location evidence="1">Cell membrane</location>
        <topology evidence="1">Peripheral membrane protein</topology>
    </subcellularLocation>
</comment>
<comment type="similarity">
    <text evidence="1">Belongs to the ATPase alpha/beta chains family.</text>
</comment>
<reference key="1">
    <citation type="journal article" date="2006" name="J. Bacteriol.">
        <title>Whole-genome sequence of Listeria welshimeri reveals common steps in genome reduction with Listeria innocua as compared to Listeria monocytogenes.</title>
        <authorList>
            <person name="Hain T."/>
            <person name="Steinweg C."/>
            <person name="Kuenne C.T."/>
            <person name="Billion A."/>
            <person name="Ghai R."/>
            <person name="Chatterjee S.S."/>
            <person name="Domann E."/>
            <person name="Kaerst U."/>
            <person name="Goesmann A."/>
            <person name="Bekel T."/>
            <person name="Bartels D."/>
            <person name="Kaiser O."/>
            <person name="Meyer F."/>
            <person name="Puehler A."/>
            <person name="Weisshaar B."/>
            <person name="Wehland J."/>
            <person name="Liang C."/>
            <person name="Dandekar T."/>
            <person name="Lampidis R."/>
            <person name="Kreft J."/>
            <person name="Goebel W."/>
            <person name="Chakraborty T."/>
        </authorList>
    </citation>
    <scope>NUCLEOTIDE SEQUENCE [LARGE SCALE GENOMIC DNA]</scope>
    <source>
        <strain>ATCC 35897 / DSM 20650 / CCUG 15529 / CIP 8149 / NCTC 11857 / SLCC 5334 / V8</strain>
    </source>
</reference>
<accession>A0AFQ9</accession>
<organism>
    <name type="scientific">Listeria welshimeri serovar 6b (strain ATCC 35897 / DSM 20650 / CCUG 15529 / CIP 8149 / NCTC 11857 / SLCC 5334 / V8)</name>
    <dbReference type="NCBI Taxonomy" id="386043"/>
    <lineage>
        <taxon>Bacteria</taxon>
        <taxon>Bacillati</taxon>
        <taxon>Bacillota</taxon>
        <taxon>Bacilli</taxon>
        <taxon>Bacillales</taxon>
        <taxon>Listeriaceae</taxon>
        <taxon>Listeria</taxon>
    </lineage>
</organism>
<sequence>MKTIQFDMNKYETHVDLEYLKEHGRVEKISDGVIFCSGLENAALHQAVLIDERHRGVILELNEEFVGIGLIDKTSDILEGMNVSVTDHFIEVNLFDDMAGRIIDTTGKMLYEESEEQPTSSSPLFRVTPEIMTIDSVTRPLNTGLAVIDSITPIGRGQRQLILGNRQSGKTQIAVDTIINQHDQNVHCIYVAIGLKAAYIAEVIETLRNHDALKYSTVVATAASDSLTAQYLTPYAGMAVAEALREQGKDVLIIFDDLTKHADAYRAITLLFNRPPGREAYPGDSFYIHSSLLERAVQMNPEHGGGSITALPMIETLSDDVTAYIPTNVISITDGQLFLKSDLFNRGQKPAVDVGVSVSRIGGDAQHPIIRKLSKNLTLILSQFEELKELLDFGNGLDEGSMKMVTDGRILTELFKQKILSPLSVTDLIVILYAFQNGFLTKVPPAKIESFKGLLLEKAHARNDFIAFSNDIKDISELSDAHTKMLEEIIQEVGRLFS</sequence>